<dbReference type="EC" id="3.2.1.8"/>
<dbReference type="EMBL" id="DS499598">
    <property type="protein sequence ID" value="EDP50325.1"/>
    <property type="status" value="ALT_SEQ"/>
    <property type="molecule type" value="Genomic_DNA"/>
</dbReference>
<dbReference type="SMR" id="B0Y6E0"/>
<dbReference type="OrthoDB" id="9074at5052"/>
<dbReference type="PhylomeDB" id="B0Y6E0"/>
<dbReference type="UniPathway" id="UPA00114"/>
<dbReference type="Proteomes" id="UP000001699">
    <property type="component" value="Unassembled WGS sequence"/>
</dbReference>
<dbReference type="GO" id="GO:0005576">
    <property type="term" value="C:extracellular region"/>
    <property type="evidence" value="ECO:0000250"/>
    <property type="project" value="UniProtKB"/>
</dbReference>
<dbReference type="GO" id="GO:0031176">
    <property type="term" value="F:endo-1,4-beta-xylanase activity"/>
    <property type="evidence" value="ECO:0000250"/>
    <property type="project" value="UniProtKB"/>
</dbReference>
<dbReference type="GO" id="GO:0045493">
    <property type="term" value="P:xylan catabolic process"/>
    <property type="evidence" value="ECO:0000250"/>
    <property type="project" value="UniProtKB"/>
</dbReference>
<dbReference type="FunFam" id="3.20.20.80:FF:000094">
    <property type="entry name" value="Endo-1,4-beta-xylanase"/>
    <property type="match status" value="1"/>
</dbReference>
<dbReference type="Gene3D" id="3.20.20.80">
    <property type="entry name" value="Glycosidases"/>
    <property type="match status" value="1"/>
</dbReference>
<dbReference type="InterPro" id="IPR044846">
    <property type="entry name" value="GH10"/>
</dbReference>
<dbReference type="InterPro" id="IPR001000">
    <property type="entry name" value="GH10_dom"/>
</dbReference>
<dbReference type="InterPro" id="IPR017853">
    <property type="entry name" value="Glycoside_hydrolase_SF"/>
</dbReference>
<dbReference type="PANTHER" id="PTHR31490:SF76">
    <property type="entry name" value="ENDO-1,4-BETA-XYLANASE C"/>
    <property type="match status" value="1"/>
</dbReference>
<dbReference type="PANTHER" id="PTHR31490">
    <property type="entry name" value="GLYCOSYL HYDROLASE"/>
    <property type="match status" value="1"/>
</dbReference>
<dbReference type="Pfam" id="PF00331">
    <property type="entry name" value="Glyco_hydro_10"/>
    <property type="match status" value="1"/>
</dbReference>
<dbReference type="PRINTS" id="PR00134">
    <property type="entry name" value="GLHYDRLASE10"/>
</dbReference>
<dbReference type="SMART" id="SM00633">
    <property type="entry name" value="Glyco_10"/>
    <property type="match status" value="1"/>
</dbReference>
<dbReference type="SUPFAM" id="SSF51445">
    <property type="entry name" value="(Trans)glycosidases"/>
    <property type="match status" value="1"/>
</dbReference>
<dbReference type="PROSITE" id="PS51760">
    <property type="entry name" value="GH10_2"/>
    <property type="match status" value="1"/>
</dbReference>
<reference key="1">
    <citation type="journal article" date="2008" name="PLoS Genet.">
        <title>Genomic islands in the pathogenic filamentous fungus Aspergillus fumigatus.</title>
        <authorList>
            <person name="Fedorova N.D."/>
            <person name="Khaldi N."/>
            <person name="Joardar V.S."/>
            <person name="Maiti R."/>
            <person name="Amedeo P."/>
            <person name="Anderson M.J."/>
            <person name="Crabtree J."/>
            <person name="Silva J.C."/>
            <person name="Badger J.H."/>
            <person name="Albarraq A."/>
            <person name="Angiuoli S."/>
            <person name="Bussey H."/>
            <person name="Bowyer P."/>
            <person name="Cotty P.J."/>
            <person name="Dyer P.S."/>
            <person name="Egan A."/>
            <person name="Galens K."/>
            <person name="Fraser-Liggett C.M."/>
            <person name="Haas B.J."/>
            <person name="Inman J.M."/>
            <person name="Kent R."/>
            <person name="Lemieux S."/>
            <person name="Malavazi I."/>
            <person name="Orvis J."/>
            <person name="Roemer T."/>
            <person name="Ronning C.M."/>
            <person name="Sundaram J.P."/>
            <person name="Sutton G."/>
            <person name="Turner G."/>
            <person name="Venter J.C."/>
            <person name="White O.R."/>
            <person name="Whitty B.R."/>
            <person name="Youngman P."/>
            <person name="Wolfe K.H."/>
            <person name="Goldman G.H."/>
            <person name="Wortman J.R."/>
            <person name="Jiang B."/>
            <person name="Denning D.W."/>
            <person name="Nierman W.C."/>
        </authorList>
    </citation>
    <scope>NUCLEOTIDE SEQUENCE [LARGE SCALE GENOMIC DNA]</scope>
    <source>
        <strain>CBS 144.89 / FGSC A1163 / CEA10</strain>
    </source>
</reference>
<gene>
    <name type="primary">xlnC</name>
    <name type="ORF">AFUB_066600</name>
</gene>
<protein>
    <recommendedName>
        <fullName>Probable endo-1,4-beta-xylanase C</fullName>
        <shortName>Xylanase C</shortName>
        <ecNumber>3.2.1.8</ecNumber>
    </recommendedName>
    <alternativeName>
        <fullName>1,4-beta-D-xylan xylanohydrolase C</fullName>
    </alternativeName>
</protein>
<feature type="signal peptide" evidence="2">
    <location>
        <begin position="1"/>
        <end position="19"/>
    </location>
</feature>
<feature type="chain" id="PRO_0000393189" description="Probable endo-1,4-beta-xylanase C">
    <location>
        <begin position="20"/>
        <end position="316"/>
    </location>
</feature>
<feature type="domain" description="GH10" evidence="3">
    <location>
        <begin position="44"/>
        <end position="315"/>
    </location>
</feature>
<feature type="active site" description="Proton donor" evidence="1">
    <location>
        <position position="155"/>
    </location>
</feature>
<feature type="active site" description="Nucleophile" evidence="1">
    <location>
        <position position="252"/>
    </location>
</feature>
<feature type="disulfide bond" evidence="1">
    <location>
        <begin position="270"/>
        <end position="276"/>
    </location>
</feature>
<keyword id="KW-0119">Carbohydrate metabolism</keyword>
<keyword id="KW-1015">Disulfide bond</keyword>
<keyword id="KW-0326">Glycosidase</keyword>
<keyword id="KW-0378">Hydrolase</keyword>
<keyword id="KW-0624">Polysaccharide degradation</keyword>
<keyword id="KW-0964">Secreted</keyword>
<keyword id="KW-0732">Signal</keyword>
<keyword id="KW-0858">Xylan degradation</keyword>
<organism>
    <name type="scientific">Aspergillus fumigatus (strain CBS 144.89 / FGSC A1163 / CEA10)</name>
    <name type="common">Neosartorya fumigata</name>
    <dbReference type="NCBI Taxonomy" id="451804"/>
    <lineage>
        <taxon>Eukaryota</taxon>
        <taxon>Fungi</taxon>
        <taxon>Dikarya</taxon>
        <taxon>Ascomycota</taxon>
        <taxon>Pezizomycotina</taxon>
        <taxon>Eurotiomycetes</taxon>
        <taxon>Eurotiomycetidae</taxon>
        <taxon>Eurotiales</taxon>
        <taxon>Aspergillaceae</taxon>
        <taxon>Aspergillus</taxon>
        <taxon>Aspergillus subgen. Fumigati</taxon>
    </lineage>
</organism>
<evidence type="ECO:0000250" key="1"/>
<evidence type="ECO:0000255" key="2"/>
<evidence type="ECO:0000255" key="3">
    <source>
        <dbReference type="PROSITE-ProRule" id="PRU01096"/>
    </source>
</evidence>
<evidence type="ECO:0000305" key="4"/>
<comment type="function">
    <text evidence="1">Endo-1,4-beta-xylanase involved in the hydrolysis of xylan, a major structural heterogeneous polysaccharide found in plant biomass representing the second most abundant polysaccharide in the biosphere, after cellulose.</text>
</comment>
<comment type="catalytic activity">
    <reaction>
        <text>Endohydrolysis of (1-&gt;4)-beta-D-xylosidic linkages in xylans.</text>
        <dbReference type="EC" id="3.2.1.8"/>
    </reaction>
</comment>
<comment type="pathway">
    <text>Glycan degradation; xylan degradation.</text>
</comment>
<comment type="subcellular location">
    <subcellularLocation>
        <location evidence="1">Secreted</location>
    </subcellularLocation>
</comment>
<comment type="induction">
    <text>Expressed in presence of xylan and repressed by glucose.</text>
</comment>
<comment type="similarity">
    <text evidence="4">Belongs to the glycosyl hydrolase 10 (cellulase F) family.</text>
</comment>
<comment type="sequence caution" evidence="4">
    <conflict type="erroneous gene model prediction">
        <sequence resource="EMBL-CDS" id="EDP50325"/>
    </conflict>
</comment>
<name>XYNC_ASPFC</name>
<proteinExistence type="evidence at transcript level"/>
<sequence>MVVLSKLVSSILFVSLVSAGVIEERQAASINQAFTSHGKKYFGTASDQALLQKSQNEAIVRKDFGQLTPENSMKWDATEPSQGRFNFAGADFLVNYAKQNGKKVRGHTLVWHSQLPSWVSAISDKNTLTSVLKNHITTVMTRYKGQIYAWDVVNEIFNEDGSLRDSVFSRVLGEDFVRIAFETARSVDPSAKLYINDYNLDSASYGKTQGMVRYVKKWLAAGIPIDGIGTQTHLGALTALASSGVSEVAITELDIAGASSQDYVNVVKACLDVPKCVGITVWGVSDRDSWRSGSSPLLFDSNYQPKAAYNAIIAAL</sequence>
<accession>B0Y6E0</accession>